<protein>
    <recommendedName>
        <fullName evidence="1">Light-independent protochlorophyllide reductase iron-sulfur ATP-binding protein</fullName>
        <shortName evidence="1">DPOR subunit L</shortName>
        <shortName evidence="1">LI-POR subunit L</shortName>
        <ecNumber evidence="1">1.3.7.7</ecNumber>
    </recommendedName>
</protein>
<name>CHLL_SYNP6</name>
<sequence>MKLSVYGKGGIGKSTTSCNISVALARRGKKVLQIGCDPKHDSTFTLTGFLIPTIIDTLQAKDYHYEDVWPEDVIYRGYGGVDCVEAGGPPAGAGCGGYVVGETVKLLKELNAFDEYDVILFDVLGDVVCGGFAAPLNYSDYCLIITDNGFDALFAANRIAASVREKARTHTLRLAGLIGNRTSKRDLIDKYIEAVPMPVLEVLPLIEDIRISRVKGKTVFEMAETEPSLLTVCDYYLNIADQILARPEGVVPKDAADRDLFSLLSDFYLNPPKQTTEAIAPEALLV</sequence>
<gene>
    <name evidence="1" type="primary">chlL</name>
    <name type="ordered locus">syc0137_c</name>
</gene>
<proteinExistence type="inferred from homology"/>
<feature type="chain" id="PRO_1000048469" description="Light-independent protochlorophyllide reductase iron-sulfur ATP-binding protein">
    <location>
        <begin position="1"/>
        <end position="286"/>
    </location>
</feature>
<feature type="binding site" evidence="1">
    <location>
        <begin position="10"/>
        <end position="15"/>
    </location>
    <ligand>
        <name>ATP</name>
        <dbReference type="ChEBI" id="CHEBI:30616"/>
    </ligand>
</feature>
<feature type="binding site" evidence="1">
    <location>
        <position position="14"/>
    </location>
    <ligand>
        <name>Mg(2+)</name>
        <dbReference type="ChEBI" id="CHEBI:18420"/>
    </ligand>
</feature>
<feature type="binding site" evidence="1">
    <location>
        <position position="39"/>
    </location>
    <ligand>
        <name>ATP</name>
        <dbReference type="ChEBI" id="CHEBI:30616"/>
    </ligand>
</feature>
<feature type="binding site" evidence="1">
    <location>
        <position position="95"/>
    </location>
    <ligand>
        <name>[4Fe-4S] cluster</name>
        <dbReference type="ChEBI" id="CHEBI:49883"/>
        <note>ligand shared between dimeric partners</note>
    </ligand>
</feature>
<feature type="binding site" evidence="1">
    <location>
        <position position="129"/>
    </location>
    <ligand>
        <name>[4Fe-4S] cluster</name>
        <dbReference type="ChEBI" id="CHEBI:49883"/>
        <note>ligand shared between dimeric partners</note>
    </ligand>
</feature>
<feature type="binding site" evidence="1">
    <location>
        <begin position="180"/>
        <end position="181"/>
    </location>
    <ligand>
        <name>ATP</name>
        <dbReference type="ChEBI" id="CHEBI:30616"/>
    </ligand>
</feature>
<organism>
    <name type="scientific">Synechococcus sp. (strain ATCC 27144 / PCC 6301 / SAUG 1402/1)</name>
    <name type="common">Anacystis nidulans</name>
    <dbReference type="NCBI Taxonomy" id="269084"/>
    <lineage>
        <taxon>Bacteria</taxon>
        <taxon>Bacillati</taxon>
        <taxon>Cyanobacteriota</taxon>
        <taxon>Cyanophyceae</taxon>
        <taxon>Synechococcales</taxon>
        <taxon>Synechococcaceae</taxon>
        <taxon>Synechococcus</taxon>
    </lineage>
</organism>
<reference key="1">
    <citation type="journal article" date="2007" name="Photosyn. Res.">
        <title>Complete nucleotide sequence of the freshwater unicellular cyanobacterium Synechococcus elongatus PCC 6301 chromosome: gene content and organization.</title>
        <authorList>
            <person name="Sugita C."/>
            <person name="Ogata K."/>
            <person name="Shikata M."/>
            <person name="Jikuya H."/>
            <person name="Takano J."/>
            <person name="Furumichi M."/>
            <person name="Kanehisa M."/>
            <person name="Omata T."/>
            <person name="Sugiura M."/>
            <person name="Sugita M."/>
        </authorList>
    </citation>
    <scope>NUCLEOTIDE SEQUENCE [LARGE SCALE GENOMIC DNA]</scope>
    <source>
        <strain>ATCC 27144 / PCC 6301 / SAUG 1402/1</strain>
    </source>
</reference>
<accession>Q5N5U1</accession>
<dbReference type="EC" id="1.3.7.7" evidence="1"/>
<dbReference type="EMBL" id="AP008231">
    <property type="protein sequence ID" value="BAD78327.1"/>
    <property type="molecule type" value="Genomic_DNA"/>
</dbReference>
<dbReference type="SMR" id="Q5N5U1"/>
<dbReference type="KEGG" id="syc:syc0137_c"/>
<dbReference type="eggNOG" id="COG1348">
    <property type="taxonomic scope" value="Bacteria"/>
</dbReference>
<dbReference type="UniPathway" id="UPA00670"/>
<dbReference type="Proteomes" id="UP000001175">
    <property type="component" value="Chromosome"/>
</dbReference>
<dbReference type="GO" id="GO:0051539">
    <property type="term" value="F:4 iron, 4 sulfur cluster binding"/>
    <property type="evidence" value="ECO:0007669"/>
    <property type="project" value="UniProtKB-UniRule"/>
</dbReference>
<dbReference type="GO" id="GO:0005524">
    <property type="term" value="F:ATP binding"/>
    <property type="evidence" value="ECO:0007669"/>
    <property type="project" value="UniProtKB-UniRule"/>
</dbReference>
<dbReference type="GO" id="GO:0046872">
    <property type="term" value="F:metal ion binding"/>
    <property type="evidence" value="ECO:0007669"/>
    <property type="project" value="UniProtKB-KW"/>
</dbReference>
<dbReference type="GO" id="GO:0016730">
    <property type="term" value="F:oxidoreductase activity, acting on iron-sulfur proteins as donors"/>
    <property type="evidence" value="ECO:0007669"/>
    <property type="project" value="InterPro"/>
</dbReference>
<dbReference type="GO" id="GO:0016636">
    <property type="term" value="F:oxidoreductase activity, acting on the CH-CH group of donors, iron-sulfur protein as acceptor"/>
    <property type="evidence" value="ECO:0007669"/>
    <property type="project" value="UniProtKB-UniRule"/>
</dbReference>
<dbReference type="GO" id="GO:0036068">
    <property type="term" value="P:light-independent chlorophyll biosynthetic process"/>
    <property type="evidence" value="ECO:0007669"/>
    <property type="project" value="UniProtKB-UniRule"/>
</dbReference>
<dbReference type="GO" id="GO:0019685">
    <property type="term" value="P:photosynthesis, dark reaction"/>
    <property type="evidence" value="ECO:0007669"/>
    <property type="project" value="InterPro"/>
</dbReference>
<dbReference type="CDD" id="cd02032">
    <property type="entry name" value="Bchl-like"/>
    <property type="match status" value="1"/>
</dbReference>
<dbReference type="Gene3D" id="3.40.50.300">
    <property type="entry name" value="P-loop containing nucleotide triphosphate hydrolases"/>
    <property type="match status" value="1"/>
</dbReference>
<dbReference type="HAMAP" id="MF_00355">
    <property type="entry name" value="ChlL_BchL"/>
    <property type="match status" value="1"/>
</dbReference>
<dbReference type="InterPro" id="IPR030655">
    <property type="entry name" value="NifH/chlL_CS"/>
</dbReference>
<dbReference type="InterPro" id="IPR000392">
    <property type="entry name" value="NifH/frxC"/>
</dbReference>
<dbReference type="InterPro" id="IPR027417">
    <property type="entry name" value="P-loop_NTPase"/>
</dbReference>
<dbReference type="InterPro" id="IPR005971">
    <property type="entry name" value="Protochlorophyllide_ATP-bd"/>
</dbReference>
<dbReference type="NCBIfam" id="TIGR01281">
    <property type="entry name" value="DPOR_bchL"/>
    <property type="match status" value="1"/>
</dbReference>
<dbReference type="PANTHER" id="PTHR42864">
    <property type="entry name" value="LIGHT-INDEPENDENT PROTOCHLOROPHYLLIDE REDUCTASE IRON-SULFUR ATP-BINDING PROTEIN"/>
    <property type="match status" value="1"/>
</dbReference>
<dbReference type="PANTHER" id="PTHR42864:SF2">
    <property type="entry name" value="LIGHT-INDEPENDENT PROTOCHLOROPHYLLIDE REDUCTASE IRON-SULFUR ATP-BINDING PROTEIN"/>
    <property type="match status" value="1"/>
</dbReference>
<dbReference type="Pfam" id="PF00142">
    <property type="entry name" value="Fer4_NifH"/>
    <property type="match status" value="1"/>
</dbReference>
<dbReference type="PIRSF" id="PIRSF000363">
    <property type="entry name" value="Nitrogenase_iron"/>
    <property type="match status" value="1"/>
</dbReference>
<dbReference type="PRINTS" id="PR00091">
    <property type="entry name" value="NITROGNASEII"/>
</dbReference>
<dbReference type="SUPFAM" id="SSF52540">
    <property type="entry name" value="P-loop containing nucleoside triphosphate hydrolases"/>
    <property type="match status" value="1"/>
</dbReference>
<dbReference type="PROSITE" id="PS00746">
    <property type="entry name" value="NIFH_FRXC_1"/>
    <property type="match status" value="1"/>
</dbReference>
<dbReference type="PROSITE" id="PS00692">
    <property type="entry name" value="NIFH_FRXC_2"/>
    <property type="match status" value="1"/>
</dbReference>
<dbReference type="PROSITE" id="PS51026">
    <property type="entry name" value="NIFH_FRXC_3"/>
    <property type="match status" value="1"/>
</dbReference>
<evidence type="ECO:0000255" key="1">
    <source>
        <dbReference type="HAMAP-Rule" id="MF_00355"/>
    </source>
</evidence>
<comment type="function">
    <text evidence="1">Component of the dark-operative protochlorophyllide reductase (DPOR) that uses Mg-ATP and reduced ferredoxin to reduce ring D of protochlorophyllide (Pchlide) to form chlorophyllide a (Chlide). This reaction is light-independent. The L component serves as a unique electron donor to the NB-component of the complex, and binds Mg-ATP.</text>
</comment>
<comment type="catalytic activity">
    <reaction evidence="1">
        <text>chlorophyllide a + oxidized 2[4Fe-4S]-[ferredoxin] + 2 ADP + 2 phosphate = protochlorophyllide a + reduced 2[4Fe-4S]-[ferredoxin] + 2 ATP + 2 H2O</text>
        <dbReference type="Rhea" id="RHEA:28202"/>
        <dbReference type="Rhea" id="RHEA-COMP:10002"/>
        <dbReference type="Rhea" id="RHEA-COMP:10004"/>
        <dbReference type="ChEBI" id="CHEBI:15377"/>
        <dbReference type="ChEBI" id="CHEBI:30616"/>
        <dbReference type="ChEBI" id="CHEBI:33722"/>
        <dbReference type="ChEBI" id="CHEBI:33723"/>
        <dbReference type="ChEBI" id="CHEBI:43474"/>
        <dbReference type="ChEBI" id="CHEBI:83348"/>
        <dbReference type="ChEBI" id="CHEBI:83350"/>
        <dbReference type="ChEBI" id="CHEBI:456216"/>
        <dbReference type="EC" id="1.3.7.7"/>
    </reaction>
</comment>
<comment type="cofactor">
    <cofactor evidence="1">
        <name>[4Fe-4S] cluster</name>
        <dbReference type="ChEBI" id="CHEBI:49883"/>
    </cofactor>
    <text evidence="1">Binds 1 [4Fe-4S] cluster per dimer.</text>
</comment>
<comment type="pathway">
    <text evidence="1">Porphyrin-containing compound metabolism; chlorophyll biosynthesis (light-independent).</text>
</comment>
<comment type="subunit">
    <text evidence="1">Homodimer. Protochlorophyllide reductase is composed of three subunits; ChlL, ChlN and ChlB.</text>
</comment>
<comment type="similarity">
    <text evidence="1">Belongs to the NifH/BchL/ChlL family.</text>
</comment>
<keyword id="KW-0004">4Fe-4S</keyword>
<keyword id="KW-0067">ATP-binding</keyword>
<keyword id="KW-0149">Chlorophyll biosynthesis</keyword>
<keyword id="KW-0408">Iron</keyword>
<keyword id="KW-0411">Iron-sulfur</keyword>
<keyword id="KW-0460">Magnesium</keyword>
<keyword id="KW-0479">Metal-binding</keyword>
<keyword id="KW-0547">Nucleotide-binding</keyword>
<keyword id="KW-0560">Oxidoreductase</keyword>
<keyword id="KW-0602">Photosynthesis</keyword>